<gene>
    <name type="primary">ymdA</name>
    <name type="ordered locus">STM1146</name>
</gene>
<evidence type="ECO:0000255" key="1"/>
<evidence type="ECO:0000305" key="2"/>
<protein>
    <recommendedName>
        <fullName>Uncharacterized protein YmdA</fullName>
    </recommendedName>
</protein>
<reference key="1">
    <citation type="journal article" date="2001" name="Nature">
        <title>Complete genome sequence of Salmonella enterica serovar Typhimurium LT2.</title>
        <authorList>
            <person name="McClelland M."/>
            <person name="Sanderson K.E."/>
            <person name="Spieth J."/>
            <person name="Clifton S.W."/>
            <person name="Latreille P."/>
            <person name="Courtney L."/>
            <person name="Porwollik S."/>
            <person name="Ali J."/>
            <person name="Dante M."/>
            <person name="Du F."/>
            <person name="Hou S."/>
            <person name="Layman D."/>
            <person name="Leonard S."/>
            <person name="Nguyen C."/>
            <person name="Scott K."/>
            <person name="Holmes A."/>
            <person name="Grewal N."/>
            <person name="Mulvaney E."/>
            <person name="Ryan E."/>
            <person name="Sun H."/>
            <person name="Florea L."/>
            <person name="Miller W."/>
            <person name="Stoneking T."/>
            <person name="Nhan M."/>
            <person name="Waterston R."/>
            <person name="Wilson R.K."/>
        </authorList>
    </citation>
    <scope>NUCLEOTIDE SEQUENCE [LARGE SCALE GENOMIC DNA]</scope>
    <source>
        <strain>LT2 / SGSC1412 / ATCC 700720</strain>
    </source>
</reference>
<reference key="2">
    <citation type="journal article" date="1998" name="J. Bacteriol.">
        <title>Curli fibers are highly conserved between Salmonella typhimurium and Escherichia coli with respect to operon structure and regulation.</title>
        <authorList>
            <person name="Romling U."/>
            <person name="Bian Z."/>
            <person name="Hammar M."/>
            <person name="Sierralta W.D."/>
            <person name="Normark S."/>
        </authorList>
    </citation>
    <scope>NUCLEOTIDE SEQUENCE [GENOMIC DNA] OF 1-54</scope>
    <source>
        <strain>SR-11</strain>
    </source>
</reference>
<sequence length="106" mass="11756">MSVIKKNIPAIGLCICAFFIHSAVGQQTVQGGVIHFRGAIVEPLCDISTHAENIDLTCLREGKKQMHRIDLRQASGLPQDIQSIATVRLHYLDAQKSLAVMNIEYR</sequence>
<accession>P0A1T0</accession>
<accession>O54295</accession>
<proteinExistence type="inferred from homology"/>
<feature type="signal peptide" evidence="1">
    <location>
        <begin position="1"/>
        <end position="25"/>
    </location>
</feature>
<feature type="chain" id="PRO_0000013821" description="Uncharacterized protein YmdA">
    <location>
        <begin position="26"/>
        <end position="106"/>
    </location>
</feature>
<dbReference type="EMBL" id="AE006468">
    <property type="protein sequence ID" value="AAL20076.1"/>
    <property type="molecule type" value="Genomic_DNA"/>
</dbReference>
<dbReference type="EMBL" id="AJ002301">
    <property type="protein sequence ID" value="CAA05319.1"/>
    <property type="molecule type" value="Genomic_DNA"/>
</dbReference>
<dbReference type="RefSeq" id="NP_460117.1">
    <property type="nucleotide sequence ID" value="NC_003197.2"/>
</dbReference>
<dbReference type="RefSeq" id="WP_000111254.1">
    <property type="nucleotide sequence ID" value="NC_003197.2"/>
</dbReference>
<dbReference type="STRING" id="99287.STM1146"/>
<dbReference type="PaxDb" id="99287-STM1146"/>
<dbReference type="GeneID" id="1252664"/>
<dbReference type="KEGG" id="stm:STM1146"/>
<dbReference type="PATRIC" id="fig|99287.12.peg.1213"/>
<dbReference type="HOGENOM" id="CLU_155233_3_1_6"/>
<dbReference type="OMA" id="PCEISAR"/>
<dbReference type="PhylomeDB" id="P0A1T0"/>
<dbReference type="BioCyc" id="SENT99287:STM1146-MONOMER"/>
<dbReference type="Proteomes" id="UP000001014">
    <property type="component" value="Chromosome"/>
</dbReference>
<name>YMDA_SALTY</name>
<organism>
    <name type="scientific">Salmonella typhimurium (strain LT2 / SGSC1412 / ATCC 700720)</name>
    <dbReference type="NCBI Taxonomy" id="99287"/>
    <lineage>
        <taxon>Bacteria</taxon>
        <taxon>Pseudomonadati</taxon>
        <taxon>Pseudomonadota</taxon>
        <taxon>Gammaproteobacteria</taxon>
        <taxon>Enterobacterales</taxon>
        <taxon>Enterobacteriaceae</taxon>
        <taxon>Salmonella</taxon>
    </lineage>
</organism>
<keyword id="KW-1185">Reference proteome</keyword>
<keyword id="KW-0732">Signal</keyword>
<comment type="similarity">
    <text evidence="2">To the N-terminal of the FimA/PapA family of fimbria proteins.</text>
</comment>